<name>CAPSD_CMVM</name>
<organismHost>
    <name type="scientific">Cucumis sativus</name>
    <name type="common">Cucumber</name>
    <dbReference type="NCBI Taxonomy" id="3659"/>
</organismHost>
<organismHost>
    <name type="scientific">Cucurbita pepo</name>
    <name type="common">Vegetable marrow</name>
    <name type="synonym">Summer squash</name>
    <dbReference type="NCBI Taxonomy" id="3663"/>
</organismHost>
<organismHost>
    <name type="scientific">Musa</name>
    <dbReference type="NCBI Taxonomy" id="4640"/>
</organismHost>
<organismHost>
    <name type="scientific">Solanum lycopersicum</name>
    <name type="common">Tomato</name>
    <name type="synonym">Lycopersicon esculentum</name>
    <dbReference type="NCBI Taxonomy" id="4081"/>
</organismHost>
<organismHost>
    <name type="scientific">Spinacia oleracea</name>
    <name type="common">Spinach</name>
    <dbReference type="NCBI Taxonomy" id="3562"/>
</organismHost>
<dbReference type="EMBL" id="D10539">
    <property type="protein sequence ID" value="BAA01399.1"/>
    <property type="molecule type" value="Genomic_RNA"/>
</dbReference>
<dbReference type="SMR" id="Q00260"/>
<dbReference type="GO" id="GO:1990904">
    <property type="term" value="C:ribonucleoprotein complex"/>
    <property type="evidence" value="ECO:0007669"/>
    <property type="project" value="UniProtKB-KW"/>
</dbReference>
<dbReference type="GO" id="GO:0039617">
    <property type="term" value="C:T=3 icosahedral viral capsid"/>
    <property type="evidence" value="ECO:0007669"/>
    <property type="project" value="UniProtKB-KW"/>
</dbReference>
<dbReference type="GO" id="GO:0019013">
    <property type="term" value="C:viral nucleocapsid"/>
    <property type="evidence" value="ECO:0007669"/>
    <property type="project" value="UniProtKB-KW"/>
</dbReference>
<dbReference type="GO" id="GO:0003723">
    <property type="term" value="F:RNA binding"/>
    <property type="evidence" value="ECO:0007669"/>
    <property type="project" value="UniProtKB-KW"/>
</dbReference>
<dbReference type="GO" id="GO:0005198">
    <property type="term" value="F:structural molecule activity"/>
    <property type="evidence" value="ECO:0007669"/>
    <property type="project" value="InterPro"/>
</dbReference>
<dbReference type="Gene3D" id="2.60.120.530">
    <property type="entry name" value="Cucumovirus coat protein, subunit A"/>
    <property type="match status" value="1"/>
</dbReference>
<dbReference type="InterPro" id="IPR000247">
    <property type="entry name" value="Cucumovirus_coat"/>
</dbReference>
<dbReference type="InterPro" id="IPR037137">
    <property type="entry name" value="Cucumovirus_coat_Asu_sf"/>
</dbReference>
<dbReference type="Pfam" id="PF00760">
    <property type="entry name" value="Cucumo_coat"/>
    <property type="match status" value="1"/>
</dbReference>
<dbReference type="PRINTS" id="PR00222">
    <property type="entry name" value="CUCUMOCOAT"/>
</dbReference>
<dbReference type="SUPFAM" id="SSF88633">
    <property type="entry name" value="Positive stranded ssRNA viruses"/>
    <property type="match status" value="1"/>
</dbReference>
<organism>
    <name type="scientific">Cucumber mosaic virus (strain M)</name>
    <name type="common">CMV</name>
    <dbReference type="NCBI Taxonomy" id="31718"/>
    <lineage>
        <taxon>Viruses</taxon>
        <taxon>Riboviria</taxon>
        <taxon>Orthornavirae</taxon>
        <taxon>Kitrinoviricota</taxon>
        <taxon>Alsuviricetes</taxon>
        <taxon>Martellivirales</taxon>
        <taxon>Bromoviridae</taxon>
        <taxon>Cucumovirus</taxon>
        <taxon>Cucumber mosaic virus</taxon>
    </lineage>
</organism>
<accession>Q00260</accession>
<sequence>MDKSESTSAGRNRRRRPRRGSRSASSSADANFRVLSQQLSRLNKTLAAGRPTINHPTFVGSERCRPGYTFTSITLRPPKIDRGSYYGKRLLLPDSVTEYDKKLVSRVQIRVNPLPKFDSTVWVTVRKVLASSDLSVAAISAMFADGASPVLVYQYAASGVQTNNKLLCDLSAMRADIGDMRKYAILVYSKDDALETDELVLHVDIEHQRIPTSRVLPV</sequence>
<comment type="function">
    <text evidence="1">Capsid protein. Probably binds RNA and plays a role in packaging (By similarity).</text>
</comment>
<comment type="subcellular location">
    <subcellularLocation>
        <location evidence="3">Virion</location>
    </subcellularLocation>
</comment>
<comment type="domain">
    <text evidence="1">The N-terminal arginine-rich stretch does not seem to be the major RNA-binding region that allows formation of an infectious ribonucleoprotein complex.</text>
</comment>
<comment type="similarity">
    <text evidence="3">Belongs to the cucumovirus capsid protein family.</text>
</comment>
<protein>
    <recommendedName>
        <fullName>Capsid protein</fullName>
        <shortName>CP</shortName>
    </recommendedName>
    <alternativeName>
        <fullName>Coat protein</fullName>
    </alternativeName>
</protein>
<evidence type="ECO:0000250" key="1"/>
<evidence type="ECO:0000256" key="2">
    <source>
        <dbReference type="SAM" id="MobiDB-lite"/>
    </source>
</evidence>
<evidence type="ECO:0000305" key="3"/>
<reference key="1">
    <citation type="journal article" date="1990" name="J. Gen. Virol.">
        <title>Nucleotide sequence and evolutionary relationships of cucumber mosaic virus (CMV) strains: CMV RNA 3.</title>
        <authorList>
            <person name="Owen J."/>
            <person name="Shintaku M."/>
            <person name="Aeschleman P."/>
            <person name="Tahar S."/>
            <person name="Palukaitis P."/>
        </authorList>
    </citation>
    <scope>NUCLEOTIDE SEQUENCE [GENOMIC RNA]</scope>
</reference>
<gene>
    <name type="ORF">ORF3b</name>
</gene>
<proteinExistence type="inferred from homology"/>
<feature type="chain" id="PRO_0000083211" description="Capsid protein">
    <location>
        <begin position="1"/>
        <end position="218"/>
    </location>
</feature>
<feature type="region of interest" description="Disordered" evidence="2">
    <location>
        <begin position="1"/>
        <end position="30"/>
    </location>
</feature>
<feature type="compositionally biased region" description="Low complexity" evidence="2">
    <location>
        <begin position="1"/>
        <end position="10"/>
    </location>
</feature>
<feature type="compositionally biased region" description="Basic residues" evidence="2">
    <location>
        <begin position="11"/>
        <end position="21"/>
    </location>
</feature>
<feature type="modified residue" description="N-acetylmethionine; by host" evidence="1">
    <location>
        <position position="1"/>
    </location>
</feature>
<keyword id="KW-0007">Acetylation</keyword>
<keyword id="KW-0167">Capsid protein</keyword>
<keyword id="KW-0687">Ribonucleoprotein</keyword>
<keyword id="KW-0694">RNA-binding</keyword>
<keyword id="KW-1142">T=3 icosahedral capsid protein</keyword>
<keyword id="KW-0543">Viral nucleoprotein</keyword>
<keyword id="KW-0946">Virion</keyword>